<accession>Q2IXS7</accession>
<comment type="function">
    <text evidence="1">Binds directly to 23S rRNA. The L1 stalk is quite mobile in the ribosome, and is involved in E site tRNA release.</text>
</comment>
<comment type="function">
    <text evidence="1">Protein L1 is also a translational repressor protein, it controls the translation of the L11 operon by binding to its mRNA.</text>
</comment>
<comment type="subunit">
    <text evidence="1">Part of the 50S ribosomal subunit.</text>
</comment>
<comment type="similarity">
    <text evidence="1">Belongs to the universal ribosomal protein uL1 family.</text>
</comment>
<feature type="chain" id="PRO_0000308091" description="Large ribosomal subunit protein uL1">
    <location>
        <begin position="1"/>
        <end position="229"/>
    </location>
</feature>
<dbReference type="EMBL" id="CP000250">
    <property type="protein sequence ID" value="ABD06983.1"/>
    <property type="molecule type" value="Genomic_DNA"/>
</dbReference>
<dbReference type="RefSeq" id="WP_011441170.1">
    <property type="nucleotide sequence ID" value="NC_007778.1"/>
</dbReference>
<dbReference type="SMR" id="Q2IXS7"/>
<dbReference type="STRING" id="316058.RPB_2278"/>
<dbReference type="KEGG" id="rpb:RPB_2278"/>
<dbReference type="eggNOG" id="COG0081">
    <property type="taxonomic scope" value="Bacteria"/>
</dbReference>
<dbReference type="HOGENOM" id="CLU_062853_0_0_5"/>
<dbReference type="OrthoDB" id="9803740at2"/>
<dbReference type="Proteomes" id="UP000008809">
    <property type="component" value="Chromosome"/>
</dbReference>
<dbReference type="GO" id="GO:0022625">
    <property type="term" value="C:cytosolic large ribosomal subunit"/>
    <property type="evidence" value="ECO:0007669"/>
    <property type="project" value="TreeGrafter"/>
</dbReference>
<dbReference type="GO" id="GO:0019843">
    <property type="term" value="F:rRNA binding"/>
    <property type="evidence" value="ECO:0007669"/>
    <property type="project" value="UniProtKB-UniRule"/>
</dbReference>
<dbReference type="GO" id="GO:0003735">
    <property type="term" value="F:structural constituent of ribosome"/>
    <property type="evidence" value="ECO:0007669"/>
    <property type="project" value="InterPro"/>
</dbReference>
<dbReference type="GO" id="GO:0000049">
    <property type="term" value="F:tRNA binding"/>
    <property type="evidence" value="ECO:0007669"/>
    <property type="project" value="UniProtKB-KW"/>
</dbReference>
<dbReference type="GO" id="GO:0006417">
    <property type="term" value="P:regulation of translation"/>
    <property type="evidence" value="ECO:0007669"/>
    <property type="project" value="UniProtKB-KW"/>
</dbReference>
<dbReference type="GO" id="GO:0006412">
    <property type="term" value="P:translation"/>
    <property type="evidence" value="ECO:0007669"/>
    <property type="project" value="UniProtKB-UniRule"/>
</dbReference>
<dbReference type="CDD" id="cd00403">
    <property type="entry name" value="Ribosomal_L1"/>
    <property type="match status" value="1"/>
</dbReference>
<dbReference type="FunFam" id="3.40.50.790:FF:000001">
    <property type="entry name" value="50S ribosomal protein L1"/>
    <property type="match status" value="1"/>
</dbReference>
<dbReference type="Gene3D" id="3.30.190.20">
    <property type="match status" value="1"/>
</dbReference>
<dbReference type="Gene3D" id="3.40.50.790">
    <property type="match status" value="1"/>
</dbReference>
<dbReference type="HAMAP" id="MF_01318_B">
    <property type="entry name" value="Ribosomal_uL1_B"/>
    <property type="match status" value="1"/>
</dbReference>
<dbReference type="InterPro" id="IPR005878">
    <property type="entry name" value="Ribosom_uL1_bac-type"/>
</dbReference>
<dbReference type="InterPro" id="IPR002143">
    <property type="entry name" value="Ribosomal_uL1"/>
</dbReference>
<dbReference type="InterPro" id="IPR023674">
    <property type="entry name" value="Ribosomal_uL1-like"/>
</dbReference>
<dbReference type="InterPro" id="IPR028364">
    <property type="entry name" value="Ribosomal_uL1/biogenesis"/>
</dbReference>
<dbReference type="InterPro" id="IPR016095">
    <property type="entry name" value="Ribosomal_uL1_3-a/b-sand"/>
</dbReference>
<dbReference type="InterPro" id="IPR023673">
    <property type="entry name" value="Ribosomal_uL1_CS"/>
</dbReference>
<dbReference type="NCBIfam" id="TIGR01169">
    <property type="entry name" value="rplA_bact"/>
    <property type="match status" value="1"/>
</dbReference>
<dbReference type="PANTHER" id="PTHR36427">
    <property type="entry name" value="54S RIBOSOMAL PROTEIN L1, MITOCHONDRIAL"/>
    <property type="match status" value="1"/>
</dbReference>
<dbReference type="PANTHER" id="PTHR36427:SF3">
    <property type="entry name" value="LARGE RIBOSOMAL SUBUNIT PROTEIN UL1M"/>
    <property type="match status" value="1"/>
</dbReference>
<dbReference type="Pfam" id="PF00687">
    <property type="entry name" value="Ribosomal_L1"/>
    <property type="match status" value="1"/>
</dbReference>
<dbReference type="PIRSF" id="PIRSF002155">
    <property type="entry name" value="Ribosomal_L1"/>
    <property type="match status" value="1"/>
</dbReference>
<dbReference type="SUPFAM" id="SSF56808">
    <property type="entry name" value="Ribosomal protein L1"/>
    <property type="match status" value="1"/>
</dbReference>
<dbReference type="PROSITE" id="PS01199">
    <property type="entry name" value="RIBOSOMAL_L1"/>
    <property type="match status" value="1"/>
</dbReference>
<keyword id="KW-1185">Reference proteome</keyword>
<keyword id="KW-0678">Repressor</keyword>
<keyword id="KW-0687">Ribonucleoprotein</keyword>
<keyword id="KW-0689">Ribosomal protein</keyword>
<keyword id="KW-0694">RNA-binding</keyword>
<keyword id="KW-0699">rRNA-binding</keyword>
<keyword id="KW-0810">Translation regulation</keyword>
<keyword id="KW-0820">tRNA-binding</keyword>
<organism>
    <name type="scientific">Rhodopseudomonas palustris (strain HaA2)</name>
    <dbReference type="NCBI Taxonomy" id="316058"/>
    <lineage>
        <taxon>Bacteria</taxon>
        <taxon>Pseudomonadati</taxon>
        <taxon>Pseudomonadota</taxon>
        <taxon>Alphaproteobacteria</taxon>
        <taxon>Hyphomicrobiales</taxon>
        <taxon>Nitrobacteraceae</taxon>
        <taxon>Rhodopseudomonas</taxon>
    </lineage>
</organism>
<protein>
    <recommendedName>
        <fullName evidence="1">Large ribosomal subunit protein uL1</fullName>
    </recommendedName>
    <alternativeName>
        <fullName evidence="2">50S ribosomal protein L1</fullName>
    </alternativeName>
</protein>
<name>RL1_RHOP2</name>
<evidence type="ECO:0000255" key="1">
    <source>
        <dbReference type="HAMAP-Rule" id="MF_01318"/>
    </source>
</evidence>
<evidence type="ECO:0000305" key="2"/>
<sequence length="229" mass="23975">MAIGKRLKKAREGIDRTKLYPLDEAVKMVKERAVSKFDETIEVALNLGVDPRHADQMVRGVVMLPNGTGRTVRVGVFARGAKADEAKAAGADVVGAEDLVEQVQAGNINFDRCIATPDMMPLVGRLGKVLGPRGMMPNPKIGTVTMDVAGAVKGAKGGSVEFRVEKAGIVQAGVGKASFSEEKLVENIKALADAVTKAKPTGAKGTYIQRVAVSSSMGPGVKVEPGSVH</sequence>
<reference key="1">
    <citation type="submission" date="2006-01" db="EMBL/GenBank/DDBJ databases">
        <title>Complete sequence of Rhodopseudomonas palustris HaA2.</title>
        <authorList>
            <consortium name="US DOE Joint Genome Institute"/>
            <person name="Copeland A."/>
            <person name="Lucas S."/>
            <person name="Lapidus A."/>
            <person name="Barry K."/>
            <person name="Detter J.C."/>
            <person name="Glavina T."/>
            <person name="Hammon N."/>
            <person name="Israni S."/>
            <person name="Pitluck S."/>
            <person name="Chain P."/>
            <person name="Malfatti S."/>
            <person name="Shin M."/>
            <person name="Vergez L."/>
            <person name="Schmutz J."/>
            <person name="Larimer F."/>
            <person name="Land M."/>
            <person name="Hauser L."/>
            <person name="Pelletier D.A."/>
            <person name="Kyrpides N."/>
            <person name="Anderson I."/>
            <person name="Oda Y."/>
            <person name="Harwood C.S."/>
            <person name="Richardson P."/>
        </authorList>
    </citation>
    <scope>NUCLEOTIDE SEQUENCE [LARGE SCALE GENOMIC DNA]</scope>
    <source>
        <strain>HaA2</strain>
    </source>
</reference>
<gene>
    <name evidence="1" type="primary">rplA</name>
    <name type="ordered locus">RPB_2278</name>
</gene>
<proteinExistence type="inferred from homology"/>